<accession>B8E3R0</accession>
<reference key="1">
    <citation type="submission" date="2008-12" db="EMBL/GenBank/DDBJ databases">
        <title>Complete sequence of chromosome of Shewanella baltica OS223.</title>
        <authorList>
            <consortium name="US DOE Joint Genome Institute"/>
            <person name="Lucas S."/>
            <person name="Copeland A."/>
            <person name="Lapidus A."/>
            <person name="Glavina del Rio T."/>
            <person name="Dalin E."/>
            <person name="Tice H."/>
            <person name="Bruce D."/>
            <person name="Goodwin L."/>
            <person name="Pitluck S."/>
            <person name="Chertkov O."/>
            <person name="Meincke L."/>
            <person name="Brettin T."/>
            <person name="Detter J.C."/>
            <person name="Han C."/>
            <person name="Kuske C.R."/>
            <person name="Larimer F."/>
            <person name="Land M."/>
            <person name="Hauser L."/>
            <person name="Kyrpides N."/>
            <person name="Ovchinnikova G."/>
            <person name="Brettar I."/>
            <person name="Rodrigues J."/>
            <person name="Konstantinidis K."/>
            <person name="Tiedje J."/>
        </authorList>
    </citation>
    <scope>NUCLEOTIDE SEQUENCE [LARGE SCALE GENOMIC DNA]</scope>
    <source>
        <strain>OS223</strain>
    </source>
</reference>
<feature type="chain" id="PRO_1000199931" description="Sulfur carrier protein TusA">
    <location>
        <begin position="1"/>
        <end position="81"/>
    </location>
</feature>
<feature type="active site" description="Cysteine persulfide intermediate" evidence="1">
    <location>
        <position position="19"/>
    </location>
</feature>
<proteinExistence type="inferred from homology"/>
<protein>
    <recommendedName>
        <fullName evidence="1">Sulfur carrier protein TusA</fullName>
    </recommendedName>
</protein>
<keyword id="KW-0963">Cytoplasm</keyword>
<evidence type="ECO:0000255" key="1">
    <source>
        <dbReference type="HAMAP-Rule" id="MF_00413"/>
    </source>
</evidence>
<gene>
    <name evidence="1" type="primary">tusA</name>
    <name type="ordered locus">Sbal223_0017</name>
</gene>
<comment type="function">
    <text evidence="1">Sulfur carrier protein which probably makes part of a sulfur-relay system.</text>
</comment>
<comment type="subcellular location">
    <subcellularLocation>
        <location evidence="1">Cytoplasm</location>
    </subcellularLocation>
</comment>
<comment type="similarity">
    <text evidence="1">Belongs to the sulfur carrier protein TusA family.</text>
</comment>
<sequence length="81" mass="9087">MNDAFSTAQHRLDALGLRCPEPVMMVRKTVRQMAAGETLLIIADDPATTRDIPSFCEFMDHTLIASETTQTPYQYLIKKGL</sequence>
<dbReference type="EMBL" id="CP001252">
    <property type="protein sequence ID" value="ACK44561.1"/>
    <property type="molecule type" value="Genomic_DNA"/>
</dbReference>
<dbReference type="RefSeq" id="WP_006083810.1">
    <property type="nucleotide sequence ID" value="NC_011663.1"/>
</dbReference>
<dbReference type="SMR" id="B8E3R0"/>
<dbReference type="GeneID" id="11770387"/>
<dbReference type="KEGG" id="sbp:Sbal223_0017"/>
<dbReference type="HOGENOM" id="CLU_165255_5_0_6"/>
<dbReference type="Proteomes" id="UP000002507">
    <property type="component" value="Chromosome"/>
</dbReference>
<dbReference type="GO" id="GO:0005737">
    <property type="term" value="C:cytoplasm"/>
    <property type="evidence" value="ECO:0007669"/>
    <property type="project" value="UniProtKB-SubCell"/>
</dbReference>
<dbReference type="GO" id="GO:0097163">
    <property type="term" value="F:sulfur carrier activity"/>
    <property type="evidence" value="ECO:0007669"/>
    <property type="project" value="UniProtKB-UniRule"/>
</dbReference>
<dbReference type="GO" id="GO:0002143">
    <property type="term" value="P:tRNA wobble position uridine thiolation"/>
    <property type="evidence" value="ECO:0007669"/>
    <property type="project" value="InterPro"/>
</dbReference>
<dbReference type="CDD" id="cd03423">
    <property type="entry name" value="SirA"/>
    <property type="match status" value="1"/>
</dbReference>
<dbReference type="Gene3D" id="3.30.110.40">
    <property type="entry name" value="TusA-like domain"/>
    <property type="match status" value="1"/>
</dbReference>
<dbReference type="HAMAP" id="MF_00413">
    <property type="entry name" value="Thiourid_synth_A"/>
    <property type="match status" value="1"/>
</dbReference>
<dbReference type="InterPro" id="IPR022931">
    <property type="entry name" value="Sulphur_carrier_TusA"/>
</dbReference>
<dbReference type="InterPro" id="IPR001455">
    <property type="entry name" value="TusA-like"/>
</dbReference>
<dbReference type="InterPro" id="IPR036868">
    <property type="entry name" value="TusA-like_sf"/>
</dbReference>
<dbReference type="NCBIfam" id="NF001423">
    <property type="entry name" value="PRK00299.1"/>
    <property type="match status" value="1"/>
</dbReference>
<dbReference type="PANTHER" id="PTHR33279:SF2">
    <property type="entry name" value="SULFUR CARRIER PROTEIN TUSA"/>
    <property type="match status" value="1"/>
</dbReference>
<dbReference type="PANTHER" id="PTHR33279">
    <property type="entry name" value="SULFUR CARRIER PROTEIN YEDF-RELATED"/>
    <property type="match status" value="1"/>
</dbReference>
<dbReference type="Pfam" id="PF01206">
    <property type="entry name" value="TusA"/>
    <property type="match status" value="1"/>
</dbReference>
<dbReference type="SUPFAM" id="SSF64307">
    <property type="entry name" value="SirA-like"/>
    <property type="match status" value="1"/>
</dbReference>
<dbReference type="PROSITE" id="PS01148">
    <property type="entry name" value="UPF0033"/>
    <property type="match status" value="1"/>
</dbReference>
<organism>
    <name type="scientific">Shewanella baltica (strain OS223)</name>
    <dbReference type="NCBI Taxonomy" id="407976"/>
    <lineage>
        <taxon>Bacteria</taxon>
        <taxon>Pseudomonadati</taxon>
        <taxon>Pseudomonadota</taxon>
        <taxon>Gammaproteobacteria</taxon>
        <taxon>Alteromonadales</taxon>
        <taxon>Shewanellaceae</taxon>
        <taxon>Shewanella</taxon>
    </lineage>
</organism>
<name>TUSA_SHEB2</name>